<keyword id="KW-0119">Carbohydrate metabolism</keyword>
<keyword id="KW-0325">Glycoprotein</keyword>
<keyword id="KW-0326">Glycosidase</keyword>
<keyword id="KW-0378">Hydrolase</keyword>
<keyword id="KW-0624">Polysaccharide degradation</keyword>
<keyword id="KW-0964">Secreted</keyword>
<keyword id="KW-0732">Signal</keyword>
<keyword id="KW-0858">Xylan degradation</keyword>
<organism>
    <name type="scientific">Humicola insolens</name>
    <name type="common">Soft-rot fungus</name>
    <dbReference type="NCBI Taxonomy" id="85995"/>
    <lineage>
        <taxon>Eukaryota</taxon>
        <taxon>Fungi</taxon>
        <taxon>Dikarya</taxon>
        <taxon>Ascomycota</taxon>
        <taxon>Pezizomycotina</taxon>
        <taxon>Sordariomycetes</taxon>
        <taxon>Sordariomycetidae</taxon>
        <taxon>Sordariales</taxon>
        <taxon>Chaetomiaceae</taxon>
        <taxon>Mycothermus</taxon>
    </lineage>
</organism>
<sequence>MVAFSSLFLGASIAATALAAPGELPGMHLNKRQTYTQSATGTHDGYYFSFWTDGGPNVRYTNEAGGQYSVTWSGNGNWVGGKGWNPGAARTINYTGTYQPNGNSYLAVYGWTRNPLVEYYVVENFGTYDPSTGAQRLGSINVDGSTYNVYRTRRTNAPSIEGTRSFDQYWSVRVNKRVGGSVDMNAHFNAWRQAGLTLGTHDYQIVATEGYFSSGSARINVGGGSTGGGNNGGGNNGGNPGGNPGGNPGGNPGGNCSPRWGQCGGQGWNGPTCCESGTTCRQQNQWYSQCL</sequence>
<feature type="signal peptide" evidence="1">
    <location>
        <begin position="1"/>
        <end position="19"/>
    </location>
</feature>
<feature type="chain" id="PRO_5002118854" description="Endo-1,4-beta-xylanase 11B" evidence="1">
    <location>
        <begin position="20"/>
        <end position="291"/>
    </location>
</feature>
<feature type="domain" description="GH11" evidence="4">
    <location>
        <begin position="34"/>
        <end position="222"/>
    </location>
</feature>
<feature type="domain" description="CBM1" evidence="3">
    <location>
        <begin position="255"/>
        <end position="291"/>
    </location>
</feature>
<feature type="region of interest" description="Disordered" evidence="5">
    <location>
        <begin position="223"/>
        <end position="246"/>
    </location>
</feature>
<feature type="active site" description="Nucleophile" evidence="4">
    <location>
        <position position="118"/>
    </location>
</feature>
<feature type="active site" description="Proton donor" evidence="4">
    <location>
        <position position="209"/>
    </location>
</feature>
<feature type="glycosylation site" description="N-linked (GlcNAc...) asparagine" evidence="2">
    <location>
        <position position="93"/>
    </location>
</feature>
<protein>
    <recommendedName>
        <fullName evidence="7">Endo-1,4-beta-xylanase 11B</fullName>
        <shortName evidence="7">Xylanase 11B</shortName>
        <ecNumber evidence="6">3.2.1.8</ecNumber>
    </recommendedName>
    <alternativeName>
        <fullName evidence="9">1,4-beta-D-xylan xylanohydrolase 11B</fullName>
    </alternativeName>
</protein>
<proteinExistence type="evidence at protein level"/>
<accession>A0A0B5JC15</accession>
<comment type="function">
    <text evidence="6">Endo-1,4-beta-xylanase involved in the hydrolysis of xylan, a major structural heterogeneous polysaccharide found in plant biomass representing the second most abundant polysaccharide in the biosphere, after cellulose (PubMed:25629035). Shows maximum activity on soluble wheat arabinoxylan (defined as 100%), moderate activity on birchwood xylan (80.5%) and beechwood xylan (76.2%), and weak activity on insoluble wheat arabinoxylan (7.0%) (PubMed:25629035). Has no activity towards glucan or carboxymethyl cellulose-sodium (CMC-Na) (PubMed:25629035).</text>
</comment>
<comment type="catalytic activity">
    <reaction evidence="6">
        <text>Endohydrolysis of (1-&gt;4)-beta-D-xylosidic linkages in xylans.</text>
        <dbReference type="EC" id="3.2.1.8"/>
    </reaction>
</comment>
<comment type="activity regulation">
    <text evidence="6">The activity iss completely inhibited by Hg(2+), a metal ion that interacts with Trp and oxidizes the indole ring, and is significantly enhanced by beta-mercaptoethanol, which counteracts the oxidation effects of the S-S linkage between Cys residues.</text>
</comment>
<comment type="biophysicochemical properties">
    <kinetics>
        <KM evidence="6">2.2 mM for beechwood xylan</KM>
        <Vmax evidence="6">462.8 umol/min/mg enzyme towards beechwood xylan</Vmax>
    </kinetics>
    <phDependence>
        <text evidence="6">Optimum pH is 6.0.</text>
    </phDependence>
    <temperatureDependence>
        <text evidence="6">Optimum temperature is 50 degrees Celsius.</text>
    </temperatureDependence>
</comment>
<comment type="pathway">
    <text evidence="6">Glycan degradation; xylan degradation.</text>
</comment>
<comment type="subcellular location">
    <subcellularLocation>
        <location evidence="10">Secreted</location>
    </subcellularLocation>
</comment>
<comment type="domain">
    <text evidence="6">The CBM1 domain assists the catalytic domain to bind to insoluble and crystalline polysaccharides and is thus required for enzyme activity on insoluble substrates.</text>
</comment>
<comment type="biotechnology">
    <text evidence="6">The SDS tolerance and neutral to alkaline preference are important for application in the detergent and textile solutions (PubMed:25629035). Moreover, its alkaline-active, cellulose activity-free characteristics make XYN11B preferred for biobleaching of paper pulp (PubMed:25629035).</text>
</comment>
<comment type="similarity">
    <text evidence="9">Belongs to the glycosyl hydrolase 11 (cellulase G) family.</text>
</comment>
<name>XY11B_HUMIN</name>
<gene>
    <name evidence="7" type="primary">Xyn11B</name>
    <name evidence="8" type="synonym">Xyl2</name>
</gene>
<dbReference type="EC" id="3.2.1.8" evidence="6"/>
<dbReference type="EMBL" id="KM275236">
    <property type="protein sequence ID" value="AJF98581.1"/>
    <property type="molecule type" value="mRNA"/>
</dbReference>
<dbReference type="SMR" id="A0A0B5JC15"/>
<dbReference type="UniPathway" id="UPA00114"/>
<dbReference type="GO" id="GO:0005576">
    <property type="term" value="C:extracellular region"/>
    <property type="evidence" value="ECO:0007669"/>
    <property type="project" value="UniProtKB-SubCell"/>
</dbReference>
<dbReference type="GO" id="GO:0030248">
    <property type="term" value="F:cellulose binding"/>
    <property type="evidence" value="ECO:0007669"/>
    <property type="project" value="InterPro"/>
</dbReference>
<dbReference type="GO" id="GO:0031176">
    <property type="term" value="F:endo-1,4-beta-xylanase activity"/>
    <property type="evidence" value="ECO:0007669"/>
    <property type="project" value="UniProtKB-EC"/>
</dbReference>
<dbReference type="GO" id="GO:0045493">
    <property type="term" value="P:xylan catabolic process"/>
    <property type="evidence" value="ECO:0007669"/>
    <property type="project" value="UniProtKB-UniPathway"/>
</dbReference>
<dbReference type="FunFam" id="2.60.120.180:FF:000001">
    <property type="entry name" value="Endo-1,4-beta-xylanase"/>
    <property type="match status" value="1"/>
</dbReference>
<dbReference type="Gene3D" id="2.60.120.180">
    <property type="match status" value="1"/>
</dbReference>
<dbReference type="InterPro" id="IPR035971">
    <property type="entry name" value="CBD_sf"/>
</dbReference>
<dbReference type="InterPro" id="IPR000254">
    <property type="entry name" value="Cellulose-bd_dom_fun"/>
</dbReference>
<dbReference type="InterPro" id="IPR013320">
    <property type="entry name" value="ConA-like_dom_sf"/>
</dbReference>
<dbReference type="InterPro" id="IPR013319">
    <property type="entry name" value="GH11/12"/>
</dbReference>
<dbReference type="InterPro" id="IPR018208">
    <property type="entry name" value="GH11_AS_1"/>
</dbReference>
<dbReference type="InterPro" id="IPR033119">
    <property type="entry name" value="GH11_AS_2"/>
</dbReference>
<dbReference type="InterPro" id="IPR033123">
    <property type="entry name" value="GH11_dom"/>
</dbReference>
<dbReference type="InterPro" id="IPR001137">
    <property type="entry name" value="Glyco_hydro_11"/>
</dbReference>
<dbReference type="PANTHER" id="PTHR46828:SF3">
    <property type="entry name" value="ENDO-1,4-BETA-XYLANASE"/>
    <property type="match status" value="1"/>
</dbReference>
<dbReference type="PANTHER" id="PTHR46828">
    <property type="entry name" value="ENDO-1,4-BETA-XYLANASE A-RELATED"/>
    <property type="match status" value="1"/>
</dbReference>
<dbReference type="Pfam" id="PF00734">
    <property type="entry name" value="CBM_1"/>
    <property type="match status" value="1"/>
</dbReference>
<dbReference type="Pfam" id="PF00457">
    <property type="entry name" value="Glyco_hydro_11"/>
    <property type="match status" value="1"/>
</dbReference>
<dbReference type="PRINTS" id="PR00911">
    <property type="entry name" value="GLHYDRLASE11"/>
</dbReference>
<dbReference type="SMART" id="SM00236">
    <property type="entry name" value="fCBD"/>
    <property type="match status" value="1"/>
</dbReference>
<dbReference type="SUPFAM" id="SSF57180">
    <property type="entry name" value="Cellulose-binding domain"/>
    <property type="match status" value="1"/>
</dbReference>
<dbReference type="SUPFAM" id="SSF49899">
    <property type="entry name" value="Concanavalin A-like lectins/glucanases"/>
    <property type="match status" value="1"/>
</dbReference>
<dbReference type="PROSITE" id="PS00562">
    <property type="entry name" value="CBM1_1"/>
    <property type="match status" value="1"/>
</dbReference>
<dbReference type="PROSITE" id="PS51164">
    <property type="entry name" value="CBM1_2"/>
    <property type="match status" value="1"/>
</dbReference>
<dbReference type="PROSITE" id="PS00776">
    <property type="entry name" value="GH11_1"/>
    <property type="match status" value="1"/>
</dbReference>
<dbReference type="PROSITE" id="PS00777">
    <property type="entry name" value="GH11_2"/>
    <property type="match status" value="1"/>
</dbReference>
<dbReference type="PROSITE" id="PS51761">
    <property type="entry name" value="GH11_3"/>
    <property type="match status" value="1"/>
</dbReference>
<evidence type="ECO:0000255" key="1"/>
<evidence type="ECO:0000255" key="2">
    <source>
        <dbReference type="PROSITE-ProRule" id="PRU00498"/>
    </source>
</evidence>
<evidence type="ECO:0000255" key="3">
    <source>
        <dbReference type="PROSITE-ProRule" id="PRU00597"/>
    </source>
</evidence>
<evidence type="ECO:0000255" key="4">
    <source>
        <dbReference type="PROSITE-ProRule" id="PRU01097"/>
    </source>
</evidence>
<evidence type="ECO:0000256" key="5">
    <source>
        <dbReference type="SAM" id="MobiDB-lite"/>
    </source>
</evidence>
<evidence type="ECO:0000269" key="6">
    <source>
    </source>
</evidence>
<evidence type="ECO:0000303" key="7">
    <source>
    </source>
</evidence>
<evidence type="ECO:0000303" key="8">
    <source>
    </source>
</evidence>
<evidence type="ECO:0000305" key="9"/>
<evidence type="ECO:0000305" key="10">
    <source>
    </source>
</evidence>
<reference key="1">
    <citation type="journal article" date="2015" name="Biomed. Res. Int.">
        <title>Molecular characterization of a new alkaline-tolerant xylanase from Humicola insolens Y1.</title>
        <authorList>
            <person name="Shi P."/>
            <person name="Du Y."/>
            <person name="Yang H."/>
            <person name="Huang H."/>
            <person name="Zhang X."/>
            <person name="Wang Y."/>
            <person name="Yao B."/>
        </authorList>
    </citation>
    <scope>NUCLEOTIDE SEQUENCE [MRNA]</scope>
    <scope>FUNCTION</scope>
    <scope>CATALYTIC ACTIVITY</scope>
    <scope>BIOPHYSICOCHEMICAL PROPERTIES</scope>
    <scope>SUBSTRATE SPECIFICITY</scope>
    <scope>ACTIVITY REGULATION</scope>
    <scope>DOMAIN</scope>
    <scope>BIOTECHNOLOGY</scope>
    <source>
        <strain>Y1</strain>
    </source>
</reference>
<reference key="2">
    <citation type="journal article" date="1994" name="Mol. Gen. Genet.">
        <title>A novel method for efficient expression cloning of fungal enzyme genes.</title>
        <authorList>
            <person name="Dalboege H."/>
            <person name="Hansen H.P.H."/>
        </authorList>
    </citation>
    <scope>IDENTIFICATION</scope>
</reference>